<name>SYM_SERP5</name>
<organism>
    <name type="scientific">Serratia proteamaculans (strain 568)</name>
    <dbReference type="NCBI Taxonomy" id="399741"/>
    <lineage>
        <taxon>Bacteria</taxon>
        <taxon>Pseudomonadati</taxon>
        <taxon>Pseudomonadota</taxon>
        <taxon>Gammaproteobacteria</taxon>
        <taxon>Enterobacterales</taxon>
        <taxon>Yersiniaceae</taxon>
        <taxon>Serratia</taxon>
    </lineage>
</organism>
<comment type="function">
    <text evidence="1">Is required not only for elongation of protein synthesis but also for the initiation of all mRNA translation through initiator tRNA(fMet) aminoacylation.</text>
</comment>
<comment type="catalytic activity">
    <reaction evidence="1">
        <text>tRNA(Met) + L-methionine + ATP = L-methionyl-tRNA(Met) + AMP + diphosphate</text>
        <dbReference type="Rhea" id="RHEA:13481"/>
        <dbReference type="Rhea" id="RHEA-COMP:9667"/>
        <dbReference type="Rhea" id="RHEA-COMP:9698"/>
        <dbReference type="ChEBI" id="CHEBI:30616"/>
        <dbReference type="ChEBI" id="CHEBI:33019"/>
        <dbReference type="ChEBI" id="CHEBI:57844"/>
        <dbReference type="ChEBI" id="CHEBI:78442"/>
        <dbReference type="ChEBI" id="CHEBI:78530"/>
        <dbReference type="ChEBI" id="CHEBI:456215"/>
        <dbReference type="EC" id="6.1.1.10"/>
    </reaction>
</comment>
<comment type="cofactor">
    <cofactor evidence="1">
        <name>Zn(2+)</name>
        <dbReference type="ChEBI" id="CHEBI:29105"/>
    </cofactor>
    <text evidence="1">Binds 1 zinc ion per subunit.</text>
</comment>
<comment type="subunit">
    <text evidence="1">Homodimer.</text>
</comment>
<comment type="subcellular location">
    <subcellularLocation>
        <location evidence="1">Cytoplasm</location>
    </subcellularLocation>
</comment>
<comment type="similarity">
    <text evidence="1">Belongs to the class-I aminoacyl-tRNA synthetase family. MetG type 1 subfamily.</text>
</comment>
<proteinExistence type="inferred from homology"/>
<sequence length="675" mass="75836">MPQVAKKLLVTCALPYANGSIHLGHMLEHIQADIWVRYQRMRGNEVHFICADDAHGTPIMLKAQQLGIKPEEMIAEMSQEHQQDFAGFGISYDNYHSTHSDENRELSNLIYGRLKENGFIKNRTISQLYDPEKGMFLPDRFVKGTCPKCKSPDQYGDNCEVCGATYSPTELIDPKSVVSGATPVLRDSEHFFFDLPSFSEMLQAWTRSGALQEQVANKMQEWFESGLQQWDISRDAPYFGFEIPDAPGKYFYVWLDAPIGYMGSFKNLCDKRGDLDFDEFWRKDSTTELYHFIGKDIVYFHSLFWPAMLEGSNFRKPTNLFVHGYVTVNGAKMSKSRGTFIKAGTYLQHLDADCLRYYYAAKLSSRIDDIDLNLEDFVQRVNADIVNKVVNLASRNAGFISKRFGGQLADKLADPALYQTFVDAAQSIAEAYASRESGRAIREIMALADLANRYVDEQAPWVVAKQEGRDADLQAICSMGINLFRVLMTYLKPVMPSLTERTEAFLNCELSWDSIQQPLLGHQVNPFKALFNRIDLDKVNEMVSASKEDMVAAKVVTGPLAEDPIQDTITFDDFAKVDMRIALITSADFVDGSDKLLKLQLDLGGETRQIFSGIRSAYPDPKALEGRLTIMVANLAPRKMRFGISEGMVMAAGPGGKEIFLLSPDSGAQPGMQVK</sequence>
<evidence type="ECO:0000255" key="1">
    <source>
        <dbReference type="HAMAP-Rule" id="MF_00098"/>
    </source>
</evidence>
<gene>
    <name evidence="1" type="primary">metG</name>
    <name type="ordered locus">Spro_1573</name>
</gene>
<dbReference type="EC" id="6.1.1.10" evidence="1"/>
<dbReference type="EMBL" id="CP000826">
    <property type="protein sequence ID" value="ABV40677.1"/>
    <property type="molecule type" value="Genomic_DNA"/>
</dbReference>
<dbReference type="SMR" id="A8GC37"/>
<dbReference type="STRING" id="399741.Spro_1573"/>
<dbReference type="KEGG" id="spe:Spro_1573"/>
<dbReference type="eggNOG" id="COG0073">
    <property type="taxonomic scope" value="Bacteria"/>
</dbReference>
<dbReference type="eggNOG" id="COG0143">
    <property type="taxonomic scope" value="Bacteria"/>
</dbReference>
<dbReference type="HOGENOM" id="CLU_009710_7_0_6"/>
<dbReference type="OrthoDB" id="9810191at2"/>
<dbReference type="GO" id="GO:0005829">
    <property type="term" value="C:cytosol"/>
    <property type="evidence" value="ECO:0007669"/>
    <property type="project" value="TreeGrafter"/>
</dbReference>
<dbReference type="GO" id="GO:0005524">
    <property type="term" value="F:ATP binding"/>
    <property type="evidence" value="ECO:0007669"/>
    <property type="project" value="UniProtKB-UniRule"/>
</dbReference>
<dbReference type="GO" id="GO:0046872">
    <property type="term" value="F:metal ion binding"/>
    <property type="evidence" value="ECO:0007669"/>
    <property type="project" value="UniProtKB-KW"/>
</dbReference>
<dbReference type="GO" id="GO:0004825">
    <property type="term" value="F:methionine-tRNA ligase activity"/>
    <property type="evidence" value="ECO:0007669"/>
    <property type="project" value="UniProtKB-UniRule"/>
</dbReference>
<dbReference type="GO" id="GO:0000049">
    <property type="term" value="F:tRNA binding"/>
    <property type="evidence" value="ECO:0007669"/>
    <property type="project" value="UniProtKB-KW"/>
</dbReference>
<dbReference type="GO" id="GO:0006431">
    <property type="term" value="P:methionyl-tRNA aminoacylation"/>
    <property type="evidence" value="ECO:0007669"/>
    <property type="project" value="UniProtKB-UniRule"/>
</dbReference>
<dbReference type="CDD" id="cd07957">
    <property type="entry name" value="Anticodon_Ia_Met"/>
    <property type="match status" value="1"/>
</dbReference>
<dbReference type="CDD" id="cd00814">
    <property type="entry name" value="MetRS_core"/>
    <property type="match status" value="1"/>
</dbReference>
<dbReference type="CDD" id="cd02800">
    <property type="entry name" value="tRNA_bind_EcMetRS_like"/>
    <property type="match status" value="1"/>
</dbReference>
<dbReference type="FunFam" id="1.10.730.10:FF:000005">
    <property type="entry name" value="Methionine--tRNA ligase"/>
    <property type="match status" value="1"/>
</dbReference>
<dbReference type="FunFam" id="2.20.28.20:FF:000001">
    <property type="entry name" value="Methionine--tRNA ligase"/>
    <property type="match status" value="1"/>
</dbReference>
<dbReference type="FunFam" id="2.40.50.140:FF:000042">
    <property type="entry name" value="Methionine--tRNA ligase"/>
    <property type="match status" value="1"/>
</dbReference>
<dbReference type="Gene3D" id="3.40.50.620">
    <property type="entry name" value="HUPs"/>
    <property type="match status" value="1"/>
</dbReference>
<dbReference type="Gene3D" id="1.10.730.10">
    <property type="entry name" value="Isoleucyl-tRNA Synthetase, Domain 1"/>
    <property type="match status" value="1"/>
</dbReference>
<dbReference type="Gene3D" id="2.20.28.20">
    <property type="entry name" value="Methionyl-tRNA synthetase, Zn-domain"/>
    <property type="match status" value="1"/>
</dbReference>
<dbReference type="Gene3D" id="2.40.50.140">
    <property type="entry name" value="Nucleic acid-binding proteins"/>
    <property type="match status" value="1"/>
</dbReference>
<dbReference type="HAMAP" id="MF_00098">
    <property type="entry name" value="Met_tRNA_synth_type1"/>
    <property type="match status" value="1"/>
</dbReference>
<dbReference type="InterPro" id="IPR001412">
    <property type="entry name" value="aa-tRNA-synth_I_CS"/>
</dbReference>
<dbReference type="InterPro" id="IPR041872">
    <property type="entry name" value="Anticodon_Met"/>
</dbReference>
<dbReference type="InterPro" id="IPR004495">
    <property type="entry name" value="Met-tRNA-synth_bsu_C"/>
</dbReference>
<dbReference type="InterPro" id="IPR023458">
    <property type="entry name" value="Met-tRNA_ligase_1"/>
</dbReference>
<dbReference type="InterPro" id="IPR014758">
    <property type="entry name" value="Met-tRNA_synth"/>
</dbReference>
<dbReference type="InterPro" id="IPR015413">
    <property type="entry name" value="Methionyl/Leucyl_tRNA_Synth"/>
</dbReference>
<dbReference type="InterPro" id="IPR033911">
    <property type="entry name" value="MetRS_core"/>
</dbReference>
<dbReference type="InterPro" id="IPR029038">
    <property type="entry name" value="MetRS_Zn"/>
</dbReference>
<dbReference type="InterPro" id="IPR012340">
    <property type="entry name" value="NA-bd_OB-fold"/>
</dbReference>
<dbReference type="InterPro" id="IPR014729">
    <property type="entry name" value="Rossmann-like_a/b/a_fold"/>
</dbReference>
<dbReference type="InterPro" id="IPR002547">
    <property type="entry name" value="tRNA-bd_dom"/>
</dbReference>
<dbReference type="InterPro" id="IPR009080">
    <property type="entry name" value="tRNAsynth_Ia_anticodon-bd"/>
</dbReference>
<dbReference type="NCBIfam" id="TIGR00398">
    <property type="entry name" value="metG"/>
    <property type="match status" value="1"/>
</dbReference>
<dbReference type="NCBIfam" id="TIGR00399">
    <property type="entry name" value="metG_C_term"/>
    <property type="match status" value="1"/>
</dbReference>
<dbReference type="NCBIfam" id="NF001100">
    <property type="entry name" value="PRK00133.1"/>
    <property type="match status" value="1"/>
</dbReference>
<dbReference type="PANTHER" id="PTHR45765">
    <property type="entry name" value="METHIONINE--TRNA LIGASE"/>
    <property type="match status" value="1"/>
</dbReference>
<dbReference type="PANTHER" id="PTHR45765:SF1">
    <property type="entry name" value="METHIONINE--TRNA LIGASE, CYTOPLASMIC"/>
    <property type="match status" value="1"/>
</dbReference>
<dbReference type="Pfam" id="PF19303">
    <property type="entry name" value="Anticodon_3"/>
    <property type="match status" value="1"/>
</dbReference>
<dbReference type="Pfam" id="PF09334">
    <property type="entry name" value="tRNA-synt_1g"/>
    <property type="match status" value="1"/>
</dbReference>
<dbReference type="Pfam" id="PF01588">
    <property type="entry name" value="tRNA_bind"/>
    <property type="match status" value="1"/>
</dbReference>
<dbReference type="PRINTS" id="PR01041">
    <property type="entry name" value="TRNASYNTHMET"/>
</dbReference>
<dbReference type="SUPFAM" id="SSF47323">
    <property type="entry name" value="Anticodon-binding domain of a subclass of class I aminoacyl-tRNA synthetases"/>
    <property type="match status" value="1"/>
</dbReference>
<dbReference type="SUPFAM" id="SSF57770">
    <property type="entry name" value="Methionyl-tRNA synthetase (MetRS), Zn-domain"/>
    <property type="match status" value="1"/>
</dbReference>
<dbReference type="SUPFAM" id="SSF50249">
    <property type="entry name" value="Nucleic acid-binding proteins"/>
    <property type="match status" value="1"/>
</dbReference>
<dbReference type="SUPFAM" id="SSF52374">
    <property type="entry name" value="Nucleotidylyl transferase"/>
    <property type="match status" value="1"/>
</dbReference>
<dbReference type="PROSITE" id="PS00178">
    <property type="entry name" value="AA_TRNA_LIGASE_I"/>
    <property type="match status" value="1"/>
</dbReference>
<dbReference type="PROSITE" id="PS50886">
    <property type="entry name" value="TRBD"/>
    <property type="match status" value="1"/>
</dbReference>
<accession>A8GC37</accession>
<reference key="1">
    <citation type="submission" date="2007-09" db="EMBL/GenBank/DDBJ databases">
        <title>Complete sequence of chromosome of Serratia proteamaculans 568.</title>
        <authorList>
            <consortium name="US DOE Joint Genome Institute"/>
            <person name="Copeland A."/>
            <person name="Lucas S."/>
            <person name="Lapidus A."/>
            <person name="Barry K."/>
            <person name="Glavina del Rio T."/>
            <person name="Dalin E."/>
            <person name="Tice H."/>
            <person name="Pitluck S."/>
            <person name="Chain P."/>
            <person name="Malfatti S."/>
            <person name="Shin M."/>
            <person name="Vergez L."/>
            <person name="Schmutz J."/>
            <person name="Larimer F."/>
            <person name="Land M."/>
            <person name="Hauser L."/>
            <person name="Kyrpides N."/>
            <person name="Kim E."/>
            <person name="Taghavi S."/>
            <person name="Newman L."/>
            <person name="Vangronsveld J."/>
            <person name="van der Lelie D."/>
            <person name="Richardson P."/>
        </authorList>
    </citation>
    <scope>NUCLEOTIDE SEQUENCE [LARGE SCALE GENOMIC DNA]</scope>
    <source>
        <strain>568</strain>
    </source>
</reference>
<feature type="chain" id="PRO_0000331901" description="Methionine--tRNA ligase">
    <location>
        <begin position="1"/>
        <end position="675"/>
    </location>
</feature>
<feature type="domain" description="tRNA-binding" evidence="1">
    <location>
        <begin position="573"/>
        <end position="675"/>
    </location>
</feature>
<feature type="short sequence motif" description="'HIGH' region">
    <location>
        <begin position="15"/>
        <end position="25"/>
    </location>
</feature>
<feature type="short sequence motif" description="'KMSKS' region">
    <location>
        <begin position="332"/>
        <end position="336"/>
    </location>
</feature>
<feature type="binding site" evidence="1">
    <location>
        <position position="146"/>
    </location>
    <ligand>
        <name>Zn(2+)</name>
        <dbReference type="ChEBI" id="CHEBI:29105"/>
    </ligand>
</feature>
<feature type="binding site" evidence="1">
    <location>
        <position position="149"/>
    </location>
    <ligand>
        <name>Zn(2+)</name>
        <dbReference type="ChEBI" id="CHEBI:29105"/>
    </ligand>
</feature>
<feature type="binding site" evidence="1">
    <location>
        <position position="159"/>
    </location>
    <ligand>
        <name>Zn(2+)</name>
        <dbReference type="ChEBI" id="CHEBI:29105"/>
    </ligand>
</feature>
<feature type="binding site" evidence="1">
    <location>
        <position position="162"/>
    </location>
    <ligand>
        <name>Zn(2+)</name>
        <dbReference type="ChEBI" id="CHEBI:29105"/>
    </ligand>
</feature>
<feature type="binding site" evidence="1">
    <location>
        <position position="335"/>
    </location>
    <ligand>
        <name>ATP</name>
        <dbReference type="ChEBI" id="CHEBI:30616"/>
    </ligand>
</feature>
<keyword id="KW-0030">Aminoacyl-tRNA synthetase</keyword>
<keyword id="KW-0067">ATP-binding</keyword>
<keyword id="KW-0963">Cytoplasm</keyword>
<keyword id="KW-0436">Ligase</keyword>
<keyword id="KW-0479">Metal-binding</keyword>
<keyword id="KW-0547">Nucleotide-binding</keyword>
<keyword id="KW-0648">Protein biosynthesis</keyword>
<keyword id="KW-0694">RNA-binding</keyword>
<keyword id="KW-0820">tRNA-binding</keyword>
<keyword id="KW-0862">Zinc</keyword>
<protein>
    <recommendedName>
        <fullName evidence="1">Methionine--tRNA ligase</fullName>
        <ecNumber evidence="1">6.1.1.10</ecNumber>
    </recommendedName>
    <alternativeName>
        <fullName evidence="1">Methionyl-tRNA synthetase</fullName>
        <shortName evidence="1">MetRS</shortName>
    </alternativeName>
</protein>